<name>TKN1_CARAU</name>
<keyword id="KW-0027">Amidation</keyword>
<keyword id="KW-0165">Cleavage on pair of basic residues</keyword>
<keyword id="KW-0903">Direct protein sequencing</keyword>
<keyword id="KW-0527">Neuropeptide</keyword>
<keyword id="KW-0529">Neurotransmitter</keyword>
<keyword id="KW-1185">Reference proteome</keyword>
<keyword id="KW-0964">Secreted</keyword>
<keyword id="KW-0732">Signal</keyword>
<dbReference type="EMBL" id="U61272">
    <property type="protein sequence ID" value="AAB86991.1"/>
    <property type="molecule type" value="mRNA"/>
</dbReference>
<dbReference type="PIR" id="JH0361">
    <property type="entry name" value="JH0361"/>
</dbReference>
<dbReference type="Proteomes" id="UP000515129">
    <property type="component" value="Unplaced"/>
</dbReference>
<dbReference type="GO" id="GO:0005576">
    <property type="term" value="C:extracellular region"/>
    <property type="evidence" value="ECO:0007669"/>
    <property type="project" value="UniProtKB-SubCell"/>
</dbReference>
<dbReference type="GO" id="GO:0045202">
    <property type="term" value="C:synapse"/>
    <property type="evidence" value="ECO:0007669"/>
    <property type="project" value="GOC"/>
</dbReference>
<dbReference type="GO" id="GO:0007268">
    <property type="term" value="P:chemical synaptic transmission"/>
    <property type="evidence" value="ECO:0007669"/>
    <property type="project" value="UniProtKB-KW"/>
</dbReference>
<dbReference type="GO" id="GO:0007218">
    <property type="term" value="P:neuropeptide signaling pathway"/>
    <property type="evidence" value="ECO:0007669"/>
    <property type="project" value="UniProtKB-KW"/>
</dbReference>
<dbReference type="GO" id="GO:0007217">
    <property type="term" value="P:tachykinin receptor signaling pathway"/>
    <property type="evidence" value="ECO:0007669"/>
    <property type="project" value="InterPro"/>
</dbReference>
<dbReference type="InterPro" id="IPR013055">
    <property type="entry name" value="Tachy_Neuro_lke_CS"/>
</dbReference>
<dbReference type="InterPro" id="IPR008215">
    <property type="entry name" value="Tachykinin_dom"/>
</dbReference>
<dbReference type="InterPro" id="IPR008216">
    <property type="entry name" value="Tachykinin_fam"/>
</dbReference>
<dbReference type="PANTHER" id="PTHR11250:SF4">
    <property type="entry name" value="PREPROTACHYKININ 1"/>
    <property type="match status" value="1"/>
</dbReference>
<dbReference type="PANTHER" id="PTHR11250">
    <property type="entry name" value="TACHYKININ"/>
    <property type="match status" value="1"/>
</dbReference>
<dbReference type="Pfam" id="PF02202">
    <property type="entry name" value="Tachykinin"/>
    <property type="match status" value="1"/>
</dbReference>
<dbReference type="PRINTS" id="PR01829">
    <property type="entry name" value="PROTACHYKNIN"/>
</dbReference>
<dbReference type="PROSITE" id="PS00267">
    <property type="entry name" value="TACHYKININ"/>
    <property type="match status" value="2"/>
</dbReference>
<proteinExistence type="evidence at protein level"/>
<reference key="1">
    <citation type="journal article" date="1997" name="Peptides">
        <title>Goldfish gamma-preprotachykinin mRNA encodes the neuropeptides substance P, carassin, and neurokinin A.</title>
        <authorList>
            <person name="Lin X.W."/>
            <person name="Peter R.E."/>
        </authorList>
    </citation>
    <scope>NUCLEOTIDE SEQUENCE [MRNA]</scope>
    <scope>TISSUE SPECIFICITY</scope>
    <source>
        <tissue>Brain</tissue>
    </source>
</reference>
<reference key="2">
    <citation type="journal article" date="1991" name="J. Neurochem.">
        <title>Carassin: a tachykinin that is structurally related to neuropeptide-gamma from the brain of the goldfish.</title>
        <authorList>
            <person name="Conlon J.M."/>
            <person name="O'Harte F."/>
            <person name="Peter R.E."/>
            <person name="Kah O."/>
        </authorList>
    </citation>
    <scope>PROTEIN SEQUENCE OF 71-91</scope>
    <scope>MASS SPECTROMETRY</scope>
    <scope>AMIDATION AT MET-91</scope>
    <source>
        <tissue>Brain</tissue>
    </source>
</reference>
<reference key="3">
    <citation type="journal article" date="1989" name="J. Comp. Neurol.">
        <title>Distribution of substance P-like immunoreactivity in the goldfish brain.</title>
        <authorList>
            <person name="Sharma S.C."/>
            <person name="Berthoud V.M."/>
            <person name="Breckwoldt R."/>
        </authorList>
    </citation>
    <scope>TISSUE SPECIFICITY</scope>
</reference>
<reference key="4">
    <citation type="journal article" date="1992" name="Anat. Embryol. (Berl.)">
        <title>The development of substance P-like immunoreactivity in the goldfish brain.</title>
        <authorList>
            <person name="Vecino E."/>
            <person name="Sharma S.C."/>
        </authorList>
    </citation>
    <scope>TISSUE SPECIFICITY</scope>
    <scope>DEVELOPMENTAL STAGE</scope>
</reference>
<reference key="5">
    <citation type="journal article" date="1992" name="Vis. Neurosci.">
        <title>Substance P modulates calcium current in retinal bipolar neurons.</title>
        <authorList>
            <person name="Ayoub G.S."/>
            <person name="Matthews G."/>
        </authorList>
    </citation>
    <scope>FUNCTION</scope>
</reference>
<reference key="6">
    <citation type="journal article" date="1997" name="Behav. Brain Res.">
        <title>Substance P facilitates memory in goldfish in an appetitively motivated learning task.</title>
        <authorList>
            <person name="Mattioli R."/>
            <person name="Santangelo E.M."/>
            <person name="Costa A.C."/>
            <person name="Vasconcelos L."/>
        </authorList>
    </citation>
    <scope>FUNCTION</scope>
</reference>
<reference key="7">
    <citation type="journal article" date="2000" name="Neural Plast.">
        <title>ACTH4-10, substance P, and dizolcipine (MK-801) accelerate functional recovery after hemilabyrinthectomy in goldfish.</title>
        <authorList>
            <person name="Mattioli R."/>
            <person name="Huston J.P."/>
            <person name="Spieler R.E."/>
        </authorList>
    </citation>
    <scope>FUNCTION</scope>
</reference>
<reference key="8">
    <citation type="journal article" date="2000" name="Peptides">
        <title>Preprotachykinin gene expression in goldfish brain: sexual, seasonal, and postprandial variations.</title>
        <authorList>
            <person name="Peyon P."/>
            <person name="Saied H."/>
            <person name="Lin X."/>
            <person name="Peter R.E."/>
        </authorList>
    </citation>
    <scope>FUNCTION</scope>
    <scope>TISSUE SPECIFICITY</scope>
    <scope>INDUCTION</scope>
</reference>
<reference key="9">
    <citation type="journal article" date="2001" name="Neurosci. Lett.">
        <title>Facilitatory effect of substance P on learning and memory in the inhibitory avoidance test for goldfish.</title>
        <authorList>
            <person name="Santangelo E.M."/>
            <person name="Morato S."/>
            <person name="Mattioli R."/>
        </authorList>
    </citation>
    <scope>FUNCTION</scope>
</reference>
<reference key="10">
    <citation type="journal article" date="2008" name="Eur. J. Neurosci.">
        <title>A primitive social circuit: vasotocin-substance P interactions modulate social behavior through a peripheral feedback mechanism in goldfish.</title>
        <authorList>
            <person name="Thompson R.R."/>
            <person name="Walton J.C."/>
            <person name="Bhalla R."/>
            <person name="George K.C."/>
            <person name="Beth E.H."/>
        </authorList>
    </citation>
    <scope>FUNCTION</scope>
    <scope>TISSUE SPECIFICITY</scope>
</reference>
<reference key="11">
    <citation type="journal article" date="2003" name="J. Pept. Res.">
        <title>Structures of neuropeptide gamma from goldfish and mammalian neuropeptide gamma, as determined by 1H NMR spectroscopy.</title>
        <authorList>
            <person name="Lee K."/>
            <person name="Lee S."/>
            <person name="Kim Y."/>
            <person name="Park N.G."/>
        </authorList>
    </citation>
    <scope>STRUCTURE BY NMR OF 71-91</scope>
</reference>
<evidence type="ECO:0000255" key="1"/>
<evidence type="ECO:0000269" key="2">
    <source>
    </source>
</evidence>
<evidence type="ECO:0000269" key="3">
    <source>
    </source>
</evidence>
<evidence type="ECO:0000269" key="4">
    <source>
    </source>
</evidence>
<evidence type="ECO:0000269" key="5">
    <source>
    </source>
</evidence>
<evidence type="ECO:0000269" key="6">
    <source>
    </source>
</evidence>
<evidence type="ECO:0000269" key="7">
    <source>
    </source>
</evidence>
<evidence type="ECO:0000305" key="8"/>
<organism>
    <name type="scientific">Carassius auratus</name>
    <name type="common">Goldfish</name>
    <dbReference type="NCBI Taxonomy" id="7957"/>
    <lineage>
        <taxon>Eukaryota</taxon>
        <taxon>Metazoa</taxon>
        <taxon>Chordata</taxon>
        <taxon>Craniata</taxon>
        <taxon>Vertebrata</taxon>
        <taxon>Euteleostomi</taxon>
        <taxon>Actinopterygii</taxon>
        <taxon>Neopterygii</taxon>
        <taxon>Teleostei</taxon>
        <taxon>Ostariophysi</taxon>
        <taxon>Cypriniformes</taxon>
        <taxon>Cyprinidae</taxon>
        <taxon>Cyprininae</taxon>
        <taxon>Carassius</taxon>
    </lineage>
</organism>
<accession>P25421</accession>
<accession>Q6LCG4</accession>
<sequence>MKFLLPSIVIFLVLCQVFGEELGPKEDLDYWTGSNQVQDEWLQADPFREIIRRMTRKPRPHQFIGLMGKRSPANAQITRKRHKINSFVGLMGKRSQEEPESYEWGTVQIYDKRR</sequence>
<comment type="function">
    <text>Tachykinins are active peptides which excite neurons, evoke behavioral responses, are potent vasodilators and secretagogues, and contract (directly or indirectly) many smooth muscles.</text>
</comment>
<comment type="function">
    <text>Substance P produces a voltage-dependent inhibition of calcium current in retinal bipolar cells. It can enhance learning and memory, may regulate social approach and feeding behaviors, and can accelerate the functional recovery in postural balance in response to light after unilateral labyrinthectomy.</text>
</comment>
<comment type="subcellular location">
    <subcellularLocation>
        <location>Secreted</location>
    </subcellularLocation>
</comment>
<comment type="tissue specificity">
    <text evidence="2 3 4 6 7">Expressed in all parts of the brain, with robust expression in the olfactory bulbs and tracts, moderate expression in the hypothalamus and posterior brain, and weak expression in the telencephalon-preoptic region and optic tectum-thalamus. Also expressed in nerve fibers, intestine, testes and pituitary gland. Not expressed in the liver or kidneys.</text>
</comment>
<comment type="developmental stage">
    <text evidence="3">Expressed in the brain throughout development, with expression first observable in the nascent diencephalon, olfactory bulbs and hypothalamus shortly after fertilization.</text>
</comment>
<comment type="induction">
    <text evidence="2">Expression is induced in the hypothalamus and olfactory bulb after feeding.</text>
</comment>
<comment type="domain">
    <text>Neuropeptide gamma contains alpha-helical structures at the C-terminus which may be required for interaction with a cognate receptor.</text>
</comment>
<comment type="mass spectrometry">
    <molecule>Neuropeptide gamma</molecule>
</comment>
<comment type="similarity">
    <text evidence="8">Belongs to the tachykinin family.</text>
</comment>
<protein>
    <recommendedName>
        <fullName>Protachykinin</fullName>
    </recommendedName>
    <alternativeName>
        <fullName>Gamma-preprotachykinin</fullName>
        <shortName>Gamma-PPT</shortName>
    </alternativeName>
    <component>
        <recommendedName>
            <fullName>Substance P</fullName>
            <shortName>SP</shortName>
        </recommendedName>
    </component>
    <component>
        <recommendedName>
            <fullName>Neuropeptide gamma</fullName>
        </recommendedName>
        <alternativeName>
            <fullName>Carassin</fullName>
        </alternativeName>
    </component>
    <component>
        <recommendedName>
            <fullName>Neurokinin A</fullName>
            <shortName>NKA</shortName>
        </recommendedName>
    </component>
    <component>
        <recommendedName>
            <fullName>C-terminal-flanking peptide</fullName>
        </recommendedName>
    </component>
</protein>
<feature type="signal peptide" evidence="1">
    <location>
        <begin position="1"/>
        <end position="19"/>
    </location>
</feature>
<feature type="propeptide" id="PRO_0000391508" evidence="1">
    <location>
        <begin position="20"/>
        <end position="55"/>
    </location>
</feature>
<feature type="peptide" id="PRO_5000145043" description="Substance P">
    <location>
        <begin position="57"/>
        <end position="67"/>
    </location>
</feature>
<feature type="peptide" id="PRO_5000145044" description="Neuropeptide gamma">
    <location>
        <begin position="71"/>
        <end position="91"/>
    </location>
</feature>
<feature type="peptide" id="PRO_5000145045" description="Neurokinin A">
    <location>
        <begin position="82"/>
        <end position="91"/>
    </location>
</feature>
<feature type="peptide" id="PRO_0000391509" description="C-terminal-flanking peptide">
    <location>
        <begin position="92"/>
        <end position="114"/>
    </location>
</feature>
<feature type="modified residue" description="Methionine amide" evidence="1">
    <location>
        <position position="67"/>
    </location>
</feature>
<feature type="modified residue" description="Methionine amide" evidence="5">
    <location>
        <position position="91"/>
    </location>
</feature>